<reference key="1">
    <citation type="journal article" date="2011" name="Proc. Natl. Acad. Sci. U.S.A.">
        <title>Genomic anatomy of Escherichia coli O157:H7 outbreaks.</title>
        <authorList>
            <person name="Eppinger M."/>
            <person name="Mammel M.K."/>
            <person name="Leclerc J.E."/>
            <person name="Ravel J."/>
            <person name="Cebula T.A."/>
        </authorList>
    </citation>
    <scope>NUCLEOTIDE SEQUENCE [LARGE SCALE GENOMIC DNA]</scope>
    <source>
        <strain>EC4115 / EHEC</strain>
    </source>
</reference>
<gene>
    <name evidence="1" type="primary">yciU</name>
    <name type="ordered locus">ECH74115_1734</name>
</gene>
<name>YCIU_ECO5E</name>
<feature type="chain" id="PRO_1000131701" description="Putative double-stranded DNA mimic protein YciU">
    <location>
        <begin position="1"/>
        <end position="109"/>
    </location>
</feature>
<protein>
    <recommendedName>
        <fullName evidence="1">Putative double-stranded DNA mimic protein YciU</fullName>
    </recommendedName>
</protein>
<evidence type="ECO:0000255" key="1">
    <source>
        <dbReference type="HAMAP-Rule" id="MF_00680"/>
    </source>
</evidence>
<organism>
    <name type="scientific">Escherichia coli O157:H7 (strain EC4115 / EHEC)</name>
    <dbReference type="NCBI Taxonomy" id="444450"/>
    <lineage>
        <taxon>Bacteria</taxon>
        <taxon>Pseudomonadati</taxon>
        <taxon>Pseudomonadota</taxon>
        <taxon>Gammaproteobacteria</taxon>
        <taxon>Enterobacterales</taxon>
        <taxon>Enterobacteriaceae</taxon>
        <taxon>Escherichia</taxon>
    </lineage>
</organism>
<accession>B5YYF3</accession>
<proteinExistence type="inferred from homology"/>
<comment type="function">
    <text evidence="1">May act as a double-stranded DNA (dsDNA) mimic. Probably regulates the activity of a dsDNA-binding protein.</text>
</comment>
<comment type="similarity">
    <text evidence="1">Belongs to the putative dsDNA mimic protein family.</text>
</comment>
<dbReference type="EMBL" id="CP001164">
    <property type="protein sequence ID" value="ACI35068.1"/>
    <property type="molecule type" value="Genomic_DNA"/>
</dbReference>
<dbReference type="RefSeq" id="WP_000366959.1">
    <property type="nucleotide sequence ID" value="NC_011353.1"/>
</dbReference>
<dbReference type="SMR" id="B5YYF3"/>
<dbReference type="KEGG" id="ecf:ECH74115_1734"/>
<dbReference type="HOGENOM" id="CLU_143392_0_0_6"/>
<dbReference type="Gene3D" id="3.10.450.140">
    <property type="entry name" value="dsDNA mimic, putative"/>
    <property type="match status" value="1"/>
</dbReference>
<dbReference type="HAMAP" id="MF_00680">
    <property type="entry name" value="Put_dsDNA_mimic"/>
    <property type="match status" value="1"/>
</dbReference>
<dbReference type="InterPro" id="IPR007376">
    <property type="entry name" value="dsDNA_mimic_put"/>
</dbReference>
<dbReference type="InterPro" id="IPR036763">
    <property type="entry name" value="Put_dsDNA_mimic_sf"/>
</dbReference>
<dbReference type="NCBIfam" id="NF003469">
    <property type="entry name" value="PRK05094.1"/>
    <property type="match status" value="1"/>
</dbReference>
<dbReference type="Pfam" id="PF04269">
    <property type="entry name" value="DUF440"/>
    <property type="match status" value="1"/>
</dbReference>
<dbReference type="PIRSF" id="PIRSF004916">
    <property type="entry name" value="UCP004916"/>
    <property type="match status" value="1"/>
</dbReference>
<dbReference type="SUPFAM" id="SSF102816">
    <property type="entry name" value="Putative dsDNA mimic"/>
    <property type="match status" value="1"/>
</dbReference>
<sequence length="109" mass="12687">MDMDLNNRLTEDETLEQAYDIFLELAADNLDPADVLLFNLQFEERGGAELFDPAEDWQEHVDFDLNPDFFAEVVIGLADSEDGEINDVFARILLCREKDHKLCHIIWRE</sequence>